<name>EDD13_HUMAN</name>
<reference key="1">
    <citation type="journal article" date="2004" name="Nature">
        <title>The DNA sequence and biology of human chromosome 19.</title>
        <authorList>
            <person name="Grimwood J."/>
            <person name="Gordon L.A."/>
            <person name="Olsen A.S."/>
            <person name="Terry A."/>
            <person name="Schmutz J."/>
            <person name="Lamerdin J.E."/>
            <person name="Hellsten U."/>
            <person name="Goodstein D."/>
            <person name="Couronne O."/>
            <person name="Tran-Gyamfi M."/>
            <person name="Aerts A."/>
            <person name="Altherr M."/>
            <person name="Ashworth L."/>
            <person name="Bajorek E."/>
            <person name="Black S."/>
            <person name="Branscomb E."/>
            <person name="Caenepeel S."/>
            <person name="Carrano A.V."/>
            <person name="Caoile C."/>
            <person name="Chan Y.M."/>
            <person name="Christensen M."/>
            <person name="Cleland C.A."/>
            <person name="Copeland A."/>
            <person name="Dalin E."/>
            <person name="Dehal P."/>
            <person name="Denys M."/>
            <person name="Detter J.C."/>
            <person name="Escobar J."/>
            <person name="Flowers D."/>
            <person name="Fotopulos D."/>
            <person name="Garcia C."/>
            <person name="Georgescu A.M."/>
            <person name="Glavina T."/>
            <person name="Gomez M."/>
            <person name="Gonzales E."/>
            <person name="Groza M."/>
            <person name="Hammon N."/>
            <person name="Hawkins T."/>
            <person name="Haydu L."/>
            <person name="Ho I."/>
            <person name="Huang W."/>
            <person name="Israni S."/>
            <person name="Jett J."/>
            <person name="Kadner K."/>
            <person name="Kimball H."/>
            <person name="Kobayashi A."/>
            <person name="Larionov V."/>
            <person name="Leem S.-H."/>
            <person name="Lopez F."/>
            <person name="Lou Y."/>
            <person name="Lowry S."/>
            <person name="Malfatti S."/>
            <person name="Martinez D."/>
            <person name="McCready P.M."/>
            <person name="Medina C."/>
            <person name="Morgan J."/>
            <person name="Nelson K."/>
            <person name="Nolan M."/>
            <person name="Ovcharenko I."/>
            <person name="Pitluck S."/>
            <person name="Pollard M."/>
            <person name="Popkie A.P."/>
            <person name="Predki P."/>
            <person name="Quan G."/>
            <person name="Ramirez L."/>
            <person name="Rash S."/>
            <person name="Retterer J."/>
            <person name="Rodriguez A."/>
            <person name="Rogers S."/>
            <person name="Salamov A."/>
            <person name="Salazar A."/>
            <person name="She X."/>
            <person name="Smith D."/>
            <person name="Slezak T."/>
            <person name="Solovyev V."/>
            <person name="Thayer N."/>
            <person name="Tice H."/>
            <person name="Tsai M."/>
            <person name="Ustaszewska A."/>
            <person name="Vo N."/>
            <person name="Wagner M."/>
            <person name="Wheeler J."/>
            <person name="Wu K."/>
            <person name="Xie G."/>
            <person name="Yang J."/>
            <person name="Dubchak I."/>
            <person name="Furey T.S."/>
            <person name="DeJong P."/>
            <person name="Dickson M."/>
            <person name="Gordon D."/>
            <person name="Eichler E.E."/>
            <person name="Pennacchio L.A."/>
            <person name="Richardson P."/>
            <person name="Stubbs L."/>
            <person name="Rokhsar D.S."/>
            <person name="Myers R.M."/>
            <person name="Rubin E.M."/>
            <person name="Lucas S.M."/>
        </authorList>
    </citation>
    <scope>NUCLEOTIDE SEQUENCE [LARGE SCALE GENOMIC DNA]</scope>
</reference>
<gene>
    <name evidence="4" type="primary">EDDM13</name>
</gene>
<protein>
    <recommendedName>
        <fullName evidence="4">Epididymal protein 13</fullName>
    </recommendedName>
</protein>
<organism>
    <name type="scientific">Homo sapiens</name>
    <name type="common">Human</name>
    <dbReference type="NCBI Taxonomy" id="9606"/>
    <lineage>
        <taxon>Eukaryota</taxon>
        <taxon>Metazoa</taxon>
        <taxon>Chordata</taxon>
        <taxon>Craniata</taxon>
        <taxon>Vertebrata</taxon>
        <taxon>Euteleostomi</taxon>
        <taxon>Mammalia</taxon>
        <taxon>Eutheria</taxon>
        <taxon>Euarchontoglires</taxon>
        <taxon>Primates</taxon>
        <taxon>Haplorrhini</taxon>
        <taxon>Catarrhini</taxon>
        <taxon>Hominidae</taxon>
        <taxon>Homo</taxon>
    </lineage>
</organism>
<comment type="subcellular location">
    <subcellularLocation>
        <location evidence="3">Secreted</location>
    </subcellularLocation>
</comment>
<keyword id="KW-0325">Glycoprotein</keyword>
<keyword id="KW-1185">Reference proteome</keyword>
<keyword id="KW-0964">Secreted</keyword>
<keyword id="KW-0732">Signal</keyword>
<proteinExistence type="inferred from homology"/>
<sequence length="161" mass="18455">MHRSEPFLKMSLLILLFLGLAEACTPREVATKEKINLLKGIIGLMSRLSPDGLRHNITSLKMPPLVSPQDRTEEEIKKILGLLSLQVLHEETSGCKEEVKPFSGTTPSRKPLPKRKNTWNFLKCAYMVMTYLFVSYNKGDWCYCHYCNLELDIRDDPCCSF</sequence>
<dbReference type="EMBL" id="AC006116">
    <property type="status" value="NOT_ANNOTATED_CDS"/>
    <property type="molecule type" value="Genomic_DNA"/>
</dbReference>
<dbReference type="EMBL" id="AC011506">
    <property type="status" value="NOT_ANNOTATED_CDS"/>
    <property type="molecule type" value="Genomic_DNA"/>
</dbReference>
<dbReference type="EMBL" id="KF456616">
    <property type="status" value="NOT_ANNOTATED_CDS"/>
    <property type="molecule type" value="Genomic_DNA"/>
</dbReference>
<dbReference type="CCDS" id="CCDS92694.1"/>
<dbReference type="RefSeq" id="NP_001341587.1">
    <property type="nucleotide sequence ID" value="NM_001354658.2"/>
</dbReference>
<dbReference type="STRING" id="9606.ENSP00000497858"/>
<dbReference type="GlyCosmos" id="A0A1B0GTR0">
    <property type="glycosylation" value="1 site, No reported glycans"/>
</dbReference>
<dbReference type="GlyGen" id="A0A1B0GTR0">
    <property type="glycosylation" value="1 site"/>
</dbReference>
<dbReference type="BioMuta" id="EDDM13"/>
<dbReference type="jPOST" id="A0A1B0GTR0"/>
<dbReference type="MassIVE" id="A0A1B0GTR0"/>
<dbReference type="Ensembl" id="ENST00000649256.2">
    <property type="protein sequence ID" value="ENSP00000497858.1"/>
    <property type="gene ID" value="ENSG00000267710.9"/>
</dbReference>
<dbReference type="GeneID" id="100506374"/>
<dbReference type="MANE-Select" id="ENST00000649256.2">
    <property type="protein sequence ID" value="ENSP00000497858.1"/>
    <property type="RefSeq nucleotide sequence ID" value="NM_001354658.2"/>
    <property type="RefSeq protein sequence ID" value="NP_001341587.1"/>
</dbReference>
<dbReference type="AGR" id="HGNC:53168"/>
<dbReference type="GeneCards" id="EDDM13"/>
<dbReference type="HGNC" id="HGNC:53168">
    <property type="gene designation" value="EDDM13"/>
</dbReference>
<dbReference type="HPA" id="ENSG00000267710">
    <property type="expression patterns" value="Tissue enriched (epididymis)"/>
</dbReference>
<dbReference type="neXtProt" id="NX_A0A1B0GTR0"/>
<dbReference type="VEuPathDB" id="HostDB:ENSG00000267710"/>
<dbReference type="GeneTree" id="ENSGT00510000055233"/>
<dbReference type="InParanoid" id="A0A1B0GTR0"/>
<dbReference type="OMA" id="DIRNDPC"/>
<dbReference type="OrthoDB" id="9806781at2759"/>
<dbReference type="PAN-GO" id="A0A1B0GTR0">
    <property type="GO annotations" value="0 GO annotations based on evolutionary models"/>
</dbReference>
<dbReference type="Pharos" id="A0A1B0GTR0">
    <property type="development level" value="Tdark"/>
</dbReference>
<dbReference type="PRO" id="PR:A0A1B0GTR0"/>
<dbReference type="Proteomes" id="UP000005640">
    <property type="component" value="Chromosome 19"/>
</dbReference>
<dbReference type="RNAct" id="A0A1B0GTR0">
    <property type="molecule type" value="protein"/>
</dbReference>
<dbReference type="Bgee" id="ENSG00000267710">
    <property type="expression patterns" value="Expressed in corpus epididymis and 105 other cell types or tissues"/>
</dbReference>
<dbReference type="ExpressionAtlas" id="A0A1B0GTR0">
    <property type="expression patterns" value="baseline and differential"/>
</dbReference>
<dbReference type="GO" id="GO:0005576">
    <property type="term" value="C:extracellular region"/>
    <property type="evidence" value="ECO:0007669"/>
    <property type="project" value="UniProtKB-SubCell"/>
</dbReference>
<evidence type="ECO:0000255" key="1"/>
<evidence type="ECO:0000255" key="2">
    <source>
        <dbReference type="PROSITE-ProRule" id="PRU00498"/>
    </source>
</evidence>
<evidence type="ECO:0000305" key="3"/>
<evidence type="ECO:0000312" key="4">
    <source>
        <dbReference type="HGNC" id="HGNC:53168"/>
    </source>
</evidence>
<feature type="signal peptide" evidence="1">
    <location>
        <begin position="1"/>
        <end position="23"/>
    </location>
</feature>
<feature type="chain" id="PRO_0000440608" description="Epididymal protein 13" evidence="1">
    <location>
        <begin position="24"/>
        <end position="161"/>
    </location>
</feature>
<feature type="glycosylation site" description="N-linked (GlcNAc...) asparagine" evidence="2">
    <location>
        <position position="56"/>
    </location>
</feature>
<accession>A0A1B0GTR0</accession>